<organism>
    <name type="scientific">Cavia porcellus</name>
    <name type="common">Guinea pig</name>
    <dbReference type="NCBI Taxonomy" id="10141"/>
    <lineage>
        <taxon>Eukaryota</taxon>
        <taxon>Metazoa</taxon>
        <taxon>Chordata</taxon>
        <taxon>Craniata</taxon>
        <taxon>Vertebrata</taxon>
        <taxon>Euteleostomi</taxon>
        <taxon>Mammalia</taxon>
        <taxon>Eutheria</taxon>
        <taxon>Euarchontoglires</taxon>
        <taxon>Glires</taxon>
        <taxon>Rodentia</taxon>
        <taxon>Hystricomorpha</taxon>
        <taxon>Caviidae</taxon>
        <taxon>Cavia</taxon>
    </lineage>
</organism>
<keyword id="KW-0007">Acetylation</keyword>
<keyword id="KW-0067">ATP-binding</keyword>
<keyword id="KW-0256">Endoplasmic reticulum</keyword>
<keyword id="KW-0276">Fatty acid metabolism</keyword>
<keyword id="KW-0325">Glycoprotein</keyword>
<keyword id="KW-0436">Ligase</keyword>
<keyword id="KW-0443">Lipid metabolism</keyword>
<keyword id="KW-0460">Magnesium</keyword>
<keyword id="KW-0472">Membrane</keyword>
<keyword id="KW-0492">Microsome</keyword>
<keyword id="KW-0496">Mitochondrion</keyword>
<keyword id="KW-1000">Mitochondrion outer membrane</keyword>
<keyword id="KW-0944">Nitration</keyword>
<keyword id="KW-0547">Nucleotide-binding</keyword>
<keyword id="KW-0576">Peroxisome</keyword>
<keyword id="KW-0597">Phosphoprotein</keyword>
<keyword id="KW-1185">Reference proteome</keyword>
<dbReference type="EC" id="6.2.1.3" evidence="3"/>
<dbReference type="EC" id="6.2.1.15" evidence="2"/>
<dbReference type="EC" id="6.2.1.24" evidence="2"/>
<dbReference type="EMBL" id="AF236818">
    <property type="protein sequence ID" value="AAF91295.1"/>
    <property type="molecule type" value="mRNA"/>
</dbReference>
<dbReference type="RefSeq" id="NP_001166379.1">
    <property type="nucleotide sequence ID" value="NM_001172908.1"/>
</dbReference>
<dbReference type="SMR" id="Q9JID6"/>
<dbReference type="FunCoup" id="Q9JID6">
    <property type="interactions" value="1939"/>
</dbReference>
<dbReference type="STRING" id="10141.ENSCPOP00000002484"/>
<dbReference type="GlyCosmos" id="Q9JID6">
    <property type="glycosylation" value="1 site, No reported glycans"/>
</dbReference>
<dbReference type="GeneID" id="100135469"/>
<dbReference type="KEGG" id="cpoc:100135469"/>
<dbReference type="CTD" id="2180"/>
<dbReference type="eggNOG" id="KOG1256">
    <property type="taxonomic scope" value="Eukaryota"/>
</dbReference>
<dbReference type="InParanoid" id="Q9JID6"/>
<dbReference type="OrthoDB" id="1700726at2759"/>
<dbReference type="Proteomes" id="UP000005447">
    <property type="component" value="Unassembled WGS sequence"/>
</dbReference>
<dbReference type="GO" id="GO:0005783">
    <property type="term" value="C:endoplasmic reticulum"/>
    <property type="evidence" value="ECO:0000250"/>
    <property type="project" value="UniProtKB"/>
</dbReference>
<dbReference type="GO" id="GO:0005789">
    <property type="term" value="C:endoplasmic reticulum membrane"/>
    <property type="evidence" value="ECO:0007669"/>
    <property type="project" value="UniProtKB-SubCell"/>
</dbReference>
<dbReference type="GO" id="GO:0005741">
    <property type="term" value="C:mitochondrial outer membrane"/>
    <property type="evidence" value="ECO:0007669"/>
    <property type="project" value="UniProtKB-SubCell"/>
</dbReference>
<dbReference type="GO" id="GO:0005778">
    <property type="term" value="C:peroxisomal membrane"/>
    <property type="evidence" value="ECO:0007669"/>
    <property type="project" value="UniProtKB-SubCell"/>
</dbReference>
<dbReference type="GO" id="GO:0047676">
    <property type="term" value="F:arachidonate-CoA ligase activity"/>
    <property type="evidence" value="ECO:0000250"/>
    <property type="project" value="UniProtKB"/>
</dbReference>
<dbReference type="GO" id="GO:0005524">
    <property type="term" value="F:ATP binding"/>
    <property type="evidence" value="ECO:0007669"/>
    <property type="project" value="UniProtKB-KW"/>
</dbReference>
<dbReference type="GO" id="GO:0004467">
    <property type="term" value="F:long-chain fatty acid-CoA ligase activity"/>
    <property type="evidence" value="ECO:0000250"/>
    <property type="project" value="UniProtKB"/>
</dbReference>
<dbReference type="GO" id="GO:0050197">
    <property type="term" value="F:phytanate-CoA ligase activity"/>
    <property type="evidence" value="ECO:0000250"/>
    <property type="project" value="UniProtKB"/>
</dbReference>
<dbReference type="GO" id="GO:0070251">
    <property type="term" value="F:pristanate-CoA ligase activity"/>
    <property type="evidence" value="ECO:0007669"/>
    <property type="project" value="RHEA"/>
</dbReference>
<dbReference type="GO" id="GO:0001676">
    <property type="term" value="P:long-chain fatty acid metabolic process"/>
    <property type="evidence" value="ECO:0000250"/>
    <property type="project" value="UniProtKB"/>
</dbReference>
<dbReference type="GO" id="GO:0000038">
    <property type="term" value="P:very long-chain fatty acid metabolic process"/>
    <property type="evidence" value="ECO:0000250"/>
    <property type="project" value="UniProtKB"/>
</dbReference>
<dbReference type="CDD" id="cd05927">
    <property type="entry name" value="LC-FACS_euk"/>
    <property type="match status" value="1"/>
</dbReference>
<dbReference type="FunFam" id="3.40.50.12780:FF:000006">
    <property type="entry name" value="long-chain-fatty-acid--CoA ligase 6 isoform X2"/>
    <property type="match status" value="1"/>
</dbReference>
<dbReference type="Gene3D" id="3.40.50.12780">
    <property type="entry name" value="N-terminal domain of ligase-like"/>
    <property type="match status" value="1"/>
</dbReference>
<dbReference type="InterPro" id="IPR020845">
    <property type="entry name" value="AMP-binding_CS"/>
</dbReference>
<dbReference type="InterPro" id="IPR000873">
    <property type="entry name" value="AMP-dep_synth/lig_dom"/>
</dbReference>
<dbReference type="InterPro" id="IPR042099">
    <property type="entry name" value="ANL_N_sf"/>
</dbReference>
<dbReference type="InterPro" id="IPR045311">
    <property type="entry name" value="LC-FACS_euk"/>
</dbReference>
<dbReference type="PANTHER" id="PTHR43272">
    <property type="entry name" value="LONG-CHAIN-FATTY-ACID--COA LIGASE"/>
    <property type="match status" value="1"/>
</dbReference>
<dbReference type="PANTHER" id="PTHR43272:SF28">
    <property type="entry name" value="LONG-CHAIN-FATTY-ACID--COA LIGASE 1"/>
    <property type="match status" value="1"/>
</dbReference>
<dbReference type="Pfam" id="PF00501">
    <property type="entry name" value="AMP-binding"/>
    <property type="match status" value="1"/>
</dbReference>
<dbReference type="SUPFAM" id="SSF56801">
    <property type="entry name" value="Acetyl-CoA synthetase-like"/>
    <property type="match status" value="1"/>
</dbReference>
<dbReference type="PROSITE" id="PS00455">
    <property type="entry name" value="AMP_BINDING"/>
    <property type="match status" value="1"/>
</dbReference>
<sequence>MQAHELLQYFRLPELVDIRQYVRTLPTNTLMGFGAFAALTTFWYATRPKALKPPCDLSMQSVEVAGSDGARRSTLLDSDEPLVYFYDDVRTLYDVFQRGIQVSNNGPCLGSRKPDQPYEWLSYKQVEDLSECIGSALLQKGFQASPDQFIGIFAQNRPEWVIIEQACFAYSMVVVPLYDTLGADAITYIVNKAELSVIFADKPEKARILLESVENKLTPGLKIIVVMDSYGSELVEQGKKCGVEVISLKAMEGLGRANRRKPKPPEPDDLAVICFTSGTTGNPKGAMITHKNVVSDCSAFVKATEKALVLNASDIHISFLPLAHMYEQLLQCVMLCHGAKIGFFQGDIRLLMDDLKALQPTIFPVVPRLLNRMFDRIFAQANTTVKRWLLDFASKRKEAELRSGIIRNNSVWDKLIFHKIQSSLGGKVRLMVTGAAPVSATVLTFLRAALGCQFYEGYGQTECTAGCSLSVPGDWTAGHVGAPMPCNFIKLVDVEEMNYMAAMGEGEVCVKGPNVFKGYLKDPAKTAEALDKDGWLHTGDIGKWLPNGTLKIIDRKKHIFKLAQGEYIAPEKIENIYVRSEPVAQVFVHGESLQAFLIAIVVPDAESLASWARKRGFEGSFEELCRNKDVKKAILEDMVRIGKDSGLKSFEQVRGIALHPELFSVDNGLLTPTMKAKRPELRNYFRSQIDELYSTIKV</sequence>
<reference key="1">
    <citation type="submission" date="2000-02" db="EMBL/GenBank/DDBJ databases">
        <title>Molecular characterization and expression of guinea-pig acyl-CoA synthetase 1.</title>
        <authorList>
            <person name="Sevoz C."/>
            <person name="Benoit E."/>
            <person name="Buronfosse T."/>
        </authorList>
    </citation>
    <scope>NUCLEOTIDE SEQUENCE [MRNA]</scope>
</reference>
<protein>
    <recommendedName>
        <fullName evidence="3">Long-chain-fatty-acid--CoA ligase 1</fullName>
        <ecNumber evidence="3">6.2.1.3</ecNumber>
    </recommendedName>
    <alternativeName>
        <fullName>Arachidonate--CoA ligase</fullName>
        <ecNumber evidence="2">6.2.1.15</ecNumber>
    </alternativeName>
    <alternativeName>
        <fullName>Long-chain acyl-CoA synthetase 1</fullName>
        <shortName>LACS 1</shortName>
    </alternativeName>
    <alternativeName>
        <fullName>Palmitoyl-CoA ligase</fullName>
    </alternativeName>
    <alternativeName>
        <fullName>Phytanate--CoA ligase</fullName>
        <ecNumber evidence="2">6.2.1.24</ecNumber>
    </alternativeName>
</protein>
<gene>
    <name evidence="3" type="primary">ACSL1</name>
    <name type="synonym">FACL1</name>
    <name type="synonym">LACS1</name>
</gene>
<comment type="function">
    <text evidence="2 3">Catalyzes the conversion of long-chain fatty acids to their active form acyl-CoAs for both synthesis of cellular lipids, and degradation via beta-oxidation (By similarity). Preferentially uses palmitoleate, oleate and linoleate (By similarity). Preferentially activates arachidonate than epoxyeicosatrienoic acids (EETs) or hydroxyeicosatrienoic acids (HETEs).</text>
</comment>
<comment type="catalytic activity">
    <reaction evidence="2">
        <text>a long-chain fatty acid + ATP + CoA = a long-chain fatty acyl-CoA + AMP + diphosphate</text>
        <dbReference type="Rhea" id="RHEA:15421"/>
        <dbReference type="ChEBI" id="CHEBI:30616"/>
        <dbReference type="ChEBI" id="CHEBI:33019"/>
        <dbReference type="ChEBI" id="CHEBI:57287"/>
        <dbReference type="ChEBI" id="CHEBI:57560"/>
        <dbReference type="ChEBI" id="CHEBI:83139"/>
        <dbReference type="ChEBI" id="CHEBI:456215"/>
        <dbReference type="EC" id="6.2.1.3"/>
    </reaction>
    <physiologicalReaction direction="left-to-right" evidence="2">
        <dbReference type="Rhea" id="RHEA:15422"/>
    </physiologicalReaction>
</comment>
<comment type="catalytic activity">
    <reaction evidence="2">
        <text>(5Z,8Z,11Z,14Z)-eicosatetraenoate + ATP + CoA = (5Z,8Z,11Z,14Z)-eicosatetraenoyl-CoA + AMP + diphosphate</text>
        <dbReference type="Rhea" id="RHEA:19713"/>
        <dbReference type="ChEBI" id="CHEBI:30616"/>
        <dbReference type="ChEBI" id="CHEBI:32395"/>
        <dbReference type="ChEBI" id="CHEBI:33019"/>
        <dbReference type="ChEBI" id="CHEBI:57287"/>
        <dbReference type="ChEBI" id="CHEBI:57368"/>
        <dbReference type="ChEBI" id="CHEBI:456215"/>
        <dbReference type="EC" id="6.2.1.15"/>
    </reaction>
    <physiologicalReaction direction="left-to-right" evidence="2">
        <dbReference type="Rhea" id="RHEA:19714"/>
    </physiologicalReaction>
</comment>
<comment type="catalytic activity">
    <reaction evidence="2">
        <text>3,7,11,15-tetramethylhexadecanoate + ATP + CoA = phytanoyl-CoA + AMP + diphosphate</text>
        <dbReference type="Rhea" id="RHEA:21380"/>
        <dbReference type="ChEBI" id="CHEBI:30616"/>
        <dbReference type="ChEBI" id="CHEBI:33019"/>
        <dbReference type="ChEBI" id="CHEBI:37257"/>
        <dbReference type="ChEBI" id="CHEBI:57287"/>
        <dbReference type="ChEBI" id="CHEBI:57391"/>
        <dbReference type="ChEBI" id="CHEBI:456215"/>
        <dbReference type="EC" id="6.2.1.24"/>
    </reaction>
    <physiologicalReaction direction="left-to-right" evidence="2">
        <dbReference type="Rhea" id="RHEA:21381"/>
    </physiologicalReaction>
</comment>
<comment type="catalytic activity">
    <reaction evidence="3">
        <text>hexadecanoate + ATP + CoA = hexadecanoyl-CoA + AMP + diphosphate</text>
        <dbReference type="Rhea" id="RHEA:30751"/>
        <dbReference type="ChEBI" id="CHEBI:7896"/>
        <dbReference type="ChEBI" id="CHEBI:30616"/>
        <dbReference type="ChEBI" id="CHEBI:33019"/>
        <dbReference type="ChEBI" id="CHEBI:57287"/>
        <dbReference type="ChEBI" id="CHEBI:57379"/>
        <dbReference type="ChEBI" id="CHEBI:456215"/>
    </reaction>
    <physiologicalReaction direction="left-to-right" evidence="3">
        <dbReference type="Rhea" id="RHEA:30752"/>
    </physiologicalReaction>
</comment>
<comment type="catalytic activity">
    <reaction evidence="3">
        <text>(E)-hexadec-2-enoate + ATP + CoA = (2E)-hexadecenoyl-CoA + AMP + diphosphate</text>
        <dbReference type="Rhea" id="RHEA:36139"/>
        <dbReference type="ChEBI" id="CHEBI:30616"/>
        <dbReference type="ChEBI" id="CHEBI:33019"/>
        <dbReference type="ChEBI" id="CHEBI:57287"/>
        <dbReference type="ChEBI" id="CHEBI:61526"/>
        <dbReference type="ChEBI" id="CHEBI:72745"/>
        <dbReference type="ChEBI" id="CHEBI:456215"/>
    </reaction>
    <physiologicalReaction direction="left-to-right" evidence="3">
        <dbReference type="Rhea" id="RHEA:36140"/>
    </physiologicalReaction>
</comment>
<comment type="catalytic activity">
    <reaction evidence="2">
        <text>2,6,10,14-tetramethylpentadecanoate + ATP + CoA = pristanoyl-CoA + AMP + diphosphate</text>
        <dbReference type="Rhea" id="RHEA:47264"/>
        <dbReference type="ChEBI" id="CHEBI:30616"/>
        <dbReference type="ChEBI" id="CHEBI:33019"/>
        <dbReference type="ChEBI" id="CHEBI:57287"/>
        <dbReference type="ChEBI" id="CHEBI:77250"/>
        <dbReference type="ChEBI" id="CHEBI:77268"/>
        <dbReference type="ChEBI" id="CHEBI:456215"/>
    </reaction>
    <physiologicalReaction direction="left-to-right" evidence="2">
        <dbReference type="Rhea" id="RHEA:47265"/>
    </physiologicalReaction>
</comment>
<comment type="catalytic activity">
    <reaction evidence="2">
        <text>14,15-epoxy-(5Z,8Z,11Z)-eicosatrienoate + ATP + CoA = 14,15-epoxy-(5Z,8Z,11Z)-eicosatrienoyl-CoA + AMP + diphosphate</text>
        <dbReference type="Rhea" id="RHEA:52016"/>
        <dbReference type="ChEBI" id="CHEBI:30616"/>
        <dbReference type="ChEBI" id="CHEBI:33019"/>
        <dbReference type="ChEBI" id="CHEBI:57287"/>
        <dbReference type="ChEBI" id="CHEBI:84024"/>
        <dbReference type="ChEBI" id="CHEBI:136117"/>
        <dbReference type="ChEBI" id="CHEBI:456215"/>
    </reaction>
    <physiologicalReaction direction="left-to-right" evidence="2">
        <dbReference type="Rhea" id="RHEA:52017"/>
    </physiologicalReaction>
</comment>
<comment type="catalytic activity">
    <reaction evidence="2">
        <text>5-hydroxy-(6E,8Z,11Z,14Z)-eicosatetraenoate + ATP + CoA = 5-hydroxy-(6E,8Z,11Z,14Z)-eicosatetraenoyl-CoA + AMP + diphosphate</text>
        <dbReference type="Rhea" id="RHEA:52108"/>
        <dbReference type="ChEBI" id="CHEBI:30616"/>
        <dbReference type="ChEBI" id="CHEBI:33019"/>
        <dbReference type="ChEBI" id="CHEBI:57287"/>
        <dbReference type="ChEBI" id="CHEBI:65341"/>
        <dbReference type="ChEBI" id="CHEBI:136407"/>
        <dbReference type="ChEBI" id="CHEBI:456215"/>
    </reaction>
    <physiologicalReaction direction="left-to-right" evidence="2">
        <dbReference type="Rhea" id="RHEA:52109"/>
    </physiologicalReaction>
</comment>
<comment type="catalytic activity">
    <reaction evidence="2">
        <text>12-hydroxy-(5Z,8Z,10E,14Z)-eicosatetraenoate + ATP + CoA = 12-hydroxy-(5Z,8Z,10E,14Z)-eicosatetraenoyl-CoA + AMP + diphosphate</text>
        <dbReference type="Rhea" id="RHEA:52112"/>
        <dbReference type="ChEBI" id="CHEBI:30616"/>
        <dbReference type="ChEBI" id="CHEBI:33019"/>
        <dbReference type="ChEBI" id="CHEBI:57287"/>
        <dbReference type="ChEBI" id="CHEBI:90718"/>
        <dbReference type="ChEBI" id="CHEBI:136408"/>
        <dbReference type="ChEBI" id="CHEBI:456215"/>
    </reaction>
    <physiologicalReaction direction="left-to-right" evidence="2">
        <dbReference type="Rhea" id="RHEA:52113"/>
    </physiologicalReaction>
</comment>
<comment type="catalytic activity">
    <reaction evidence="2">
        <text>15-hydroxy-(5Z,8Z,11Z,13E)-eicosatetraenoate + ATP + CoA = 15-hydroxy-(5Z,8Z,11Z,13E)-eicosatetraenoyl-CoA + AMP + diphosphate</text>
        <dbReference type="Rhea" id="RHEA:52116"/>
        <dbReference type="ChEBI" id="CHEBI:30616"/>
        <dbReference type="ChEBI" id="CHEBI:33019"/>
        <dbReference type="ChEBI" id="CHEBI:57287"/>
        <dbReference type="ChEBI" id="CHEBI:78832"/>
        <dbReference type="ChEBI" id="CHEBI:136409"/>
        <dbReference type="ChEBI" id="CHEBI:456215"/>
    </reaction>
    <physiologicalReaction direction="left-to-right" evidence="2">
        <dbReference type="Rhea" id="RHEA:52117"/>
    </physiologicalReaction>
</comment>
<comment type="catalytic activity">
    <reaction evidence="3">
        <text>(9Z)-octadecenoate + ATP + CoA = (9Z)-octadecenoyl-CoA + AMP + diphosphate</text>
        <dbReference type="Rhea" id="RHEA:33607"/>
        <dbReference type="ChEBI" id="CHEBI:30616"/>
        <dbReference type="ChEBI" id="CHEBI:30823"/>
        <dbReference type="ChEBI" id="CHEBI:33019"/>
        <dbReference type="ChEBI" id="CHEBI:57287"/>
        <dbReference type="ChEBI" id="CHEBI:57387"/>
        <dbReference type="ChEBI" id="CHEBI:456215"/>
    </reaction>
    <physiologicalReaction direction="left-to-right" evidence="3">
        <dbReference type="Rhea" id="RHEA:33608"/>
    </physiologicalReaction>
</comment>
<comment type="cofactor">
    <cofactor evidence="1">
        <name>Mg(2+)</name>
        <dbReference type="ChEBI" id="CHEBI:18420"/>
    </cofactor>
</comment>
<comment type="activity regulation">
    <text evidence="2">Inhibited at high temperature and by arachidonate.</text>
</comment>
<comment type="subcellular location">
    <subcellularLocation>
        <location>Microsome membrane</location>
        <topology>Peripheral membrane protein</topology>
    </subcellularLocation>
    <subcellularLocation>
        <location evidence="1">Mitochondrion outer membrane</location>
        <topology evidence="1">Peripheral membrane protein</topology>
    </subcellularLocation>
    <subcellularLocation>
        <location evidence="1">Peroxisome membrane</location>
        <topology evidence="1">Peripheral membrane protein</topology>
    </subcellularLocation>
    <subcellularLocation>
        <location evidence="3">Endoplasmic reticulum membrane</location>
        <topology evidence="1">Peripheral membrane protein</topology>
    </subcellularLocation>
</comment>
<comment type="similarity">
    <text evidence="5">Belongs to the ATP-dependent AMP-binding enzyme family.</text>
</comment>
<feature type="chain" id="PRO_0000193103" description="Long-chain-fatty-acid--CoA ligase 1">
    <location>
        <begin position="1"/>
        <end position="698"/>
    </location>
</feature>
<feature type="modified residue" description="N-acetylmethionine" evidence="3">
    <location>
        <position position="1"/>
    </location>
</feature>
<feature type="modified residue" description="3'-nitrotyrosine" evidence="2">
    <location>
        <position position="9"/>
    </location>
</feature>
<feature type="modified residue" description="Phosphotyrosine" evidence="2">
    <location>
        <position position="84"/>
    </location>
</feature>
<feature type="modified residue" description="N6-acetyllysine" evidence="4">
    <location>
        <position position="356"/>
    </location>
</feature>
<feature type="modified residue" description="N6-acetyllysine" evidence="4">
    <location>
        <position position="386"/>
    </location>
</feature>
<feature type="modified residue" description="Phosphoserine" evidence="3">
    <location>
        <position position="620"/>
    </location>
</feature>
<feature type="modified residue" description="N6-acetyllysine" evidence="2">
    <location>
        <position position="632"/>
    </location>
</feature>
<feature type="glycosylation site" description="O-linked (GlcNAc) serine" evidence="1">
    <location>
        <position position="135"/>
    </location>
</feature>
<name>ACSL1_CAVPO</name>
<proteinExistence type="evidence at transcript level"/>
<accession>Q9JID6</accession>
<evidence type="ECO:0000250" key="1"/>
<evidence type="ECO:0000250" key="2">
    <source>
        <dbReference type="UniProtKB" id="P18163"/>
    </source>
</evidence>
<evidence type="ECO:0000250" key="3">
    <source>
        <dbReference type="UniProtKB" id="P33121"/>
    </source>
</evidence>
<evidence type="ECO:0000250" key="4">
    <source>
        <dbReference type="UniProtKB" id="P41216"/>
    </source>
</evidence>
<evidence type="ECO:0000305" key="5"/>